<keyword id="KW-0963">Cytoplasm</keyword>
<keyword id="KW-0620">Polyamine biosynthesis</keyword>
<keyword id="KW-1185">Reference proteome</keyword>
<keyword id="KW-0745">Spermidine biosynthesis</keyword>
<keyword id="KW-0808">Transferase</keyword>
<accession>Q5JFG9</accession>
<sequence>MGYNEQERAFIEWYPRGYGVGFKVKRRLFETQTEYQRLEIYETEGFGKLLVLDGTVQLVEVGEESYHEVLVHPVMLAHPNPRKVLVIGGGDGGTLREVLRHDTVEKAIMVEIDEGVVEASYLYLDVAKDLLDRLIKKEEPRAELIIGDGVKYLRETDERFDVIIVDSTDPVGPAKLLFSEEFYRDAYEKLNEKGLYVTQAGSVYLFTNELLDAYKAMKKVFDRVYYFSFPVIGYASPWSFLVGVKGDVDFTRIDLERAKKLDLYYYDPERHETLFQMPRYVRKLLEGQ</sequence>
<reference key="1">
    <citation type="journal article" date="2005" name="Genome Res.">
        <title>Complete genome sequence of the hyperthermophilic archaeon Thermococcus kodakaraensis KOD1 and comparison with Pyrococcus genomes.</title>
        <authorList>
            <person name="Fukui T."/>
            <person name="Atomi H."/>
            <person name="Kanai T."/>
            <person name="Matsumi R."/>
            <person name="Fujiwara S."/>
            <person name="Imanaka T."/>
        </authorList>
    </citation>
    <scope>NUCLEOTIDE SEQUENCE [LARGE SCALE GENOMIC DNA]</scope>
    <source>
        <strain>ATCC BAA-918 / JCM 12380 / KOD1</strain>
    </source>
</reference>
<reference key="2">
    <citation type="journal article" date="2010" name="J. Bacteriol.">
        <title>Dual biosynthesis pathway for longer-chain polyamines in the hyperthermophilic archaeon Thermococcus kodakarensis.</title>
        <authorList>
            <person name="Morimoto N."/>
            <person name="Fukuda W."/>
            <person name="Nakajima N."/>
            <person name="Masuda T."/>
            <person name="Terui Y."/>
            <person name="Kanai T."/>
            <person name="Oshima T."/>
            <person name="Imanaka T."/>
            <person name="Fujiwara S."/>
        </authorList>
    </citation>
    <scope>FUNCTION</scope>
    <scope>CATALYTIC ACTIVITY</scope>
    <scope>DISRUPTION PHENOTYPE</scope>
    <scope>BIOPHYSICOCHEMICAL PROPERTIES</scope>
    <scope>SUBSTRATE SPECIFICITY</scope>
    <scope>SUBCELLULAR LOCATION</scope>
    <source>
        <strain>ATCC BAA-918 / JCM 12380 / KOD1</strain>
    </source>
</reference>
<organism>
    <name type="scientific">Thermococcus kodakarensis (strain ATCC BAA-918 / JCM 12380 / KOD1)</name>
    <name type="common">Pyrococcus kodakaraensis (strain KOD1)</name>
    <dbReference type="NCBI Taxonomy" id="69014"/>
    <lineage>
        <taxon>Archaea</taxon>
        <taxon>Methanobacteriati</taxon>
        <taxon>Methanobacteriota</taxon>
        <taxon>Thermococci</taxon>
        <taxon>Thermococcales</taxon>
        <taxon>Thermococcaceae</taxon>
        <taxon>Thermococcus</taxon>
    </lineage>
</organism>
<gene>
    <name evidence="1" type="primary">speE</name>
    <name type="ordered locus">TK0147</name>
</gene>
<feature type="chain" id="PRO_0000156532" description="Polyamine aminopropyltransferase">
    <location>
        <begin position="1"/>
        <end position="288"/>
    </location>
</feature>
<feature type="domain" description="PABS" evidence="1">
    <location>
        <begin position="11"/>
        <end position="245"/>
    </location>
</feature>
<feature type="active site" description="Proton acceptor" evidence="1">
    <location>
        <position position="166"/>
    </location>
</feature>
<feature type="binding site" evidence="1">
    <location>
        <position position="36"/>
    </location>
    <ligand>
        <name>S-methyl-5'-thioadenosine</name>
        <dbReference type="ChEBI" id="CHEBI:17509"/>
    </ligand>
</feature>
<feature type="binding site" evidence="1">
    <location>
        <position position="67"/>
    </location>
    <ligand>
        <name>spermidine</name>
        <dbReference type="ChEBI" id="CHEBI:57834"/>
    </ligand>
</feature>
<feature type="binding site" evidence="1">
    <location>
        <position position="91"/>
    </location>
    <ligand>
        <name>spermidine</name>
        <dbReference type="ChEBI" id="CHEBI:57834"/>
    </ligand>
</feature>
<feature type="binding site" evidence="1">
    <location>
        <position position="111"/>
    </location>
    <ligand>
        <name>S-methyl-5'-thioadenosine</name>
        <dbReference type="ChEBI" id="CHEBI:17509"/>
    </ligand>
</feature>
<feature type="binding site" evidence="1">
    <location>
        <begin position="148"/>
        <end position="149"/>
    </location>
    <ligand>
        <name>S-methyl-5'-thioadenosine</name>
        <dbReference type="ChEBI" id="CHEBI:17509"/>
    </ligand>
</feature>
<feature type="binding site" evidence="1">
    <location>
        <begin position="166"/>
        <end position="169"/>
    </location>
    <ligand>
        <name>spermidine</name>
        <dbReference type="ChEBI" id="CHEBI:57834"/>
    </ligand>
</feature>
<feature type="binding site" evidence="1">
    <location>
        <position position="173"/>
    </location>
    <ligand>
        <name>S-methyl-5'-thioadenosine</name>
        <dbReference type="ChEBI" id="CHEBI:17509"/>
    </ligand>
</feature>
<dbReference type="EC" id="2.5.1.104" evidence="2"/>
<dbReference type="EC" id="2.5.1.-" evidence="2"/>
<dbReference type="EC" id="2.5.1.16" evidence="1 2"/>
<dbReference type="EMBL" id="AP006878">
    <property type="protein sequence ID" value="BAD84336.1"/>
    <property type="molecule type" value="Genomic_DNA"/>
</dbReference>
<dbReference type="RefSeq" id="WP_011249102.1">
    <property type="nucleotide sequence ID" value="NC_006624.1"/>
</dbReference>
<dbReference type="SMR" id="Q5JFG9"/>
<dbReference type="FunCoup" id="Q5JFG9">
    <property type="interactions" value="156"/>
</dbReference>
<dbReference type="STRING" id="69014.TK0147"/>
<dbReference type="EnsemblBacteria" id="BAD84336">
    <property type="protein sequence ID" value="BAD84336"/>
    <property type="gene ID" value="TK0147"/>
</dbReference>
<dbReference type="GeneID" id="78446652"/>
<dbReference type="KEGG" id="tko:TK0147"/>
<dbReference type="PATRIC" id="fig|69014.16.peg.147"/>
<dbReference type="eggNOG" id="arCOG00050">
    <property type="taxonomic scope" value="Archaea"/>
</dbReference>
<dbReference type="HOGENOM" id="CLU_048199_0_1_2"/>
<dbReference type="InParanoid" id="Q5JFG9"/>
<dbReference type="OrthoDB" id="10538at2157"/>
<dbReference type="PhylomeDB" id="Q5JFG9"/>
<dbReference type="BioCyc" id="MetaCyc:MONOMER-16734"/>
<dbReference type="BRENDA" id="2.5.1.104">
    <property type="organism ID" value="5246"/>
</dbReference>
<dbReference type="UniPathway" id="UPA00248">
    <property type="reaction ID" value="UER00314"/>
</dbReference>
<dbReference type="Proteomes" id="UP000000536">
    <property type="component" value="Chromosome"/>
</dbReference>
<dbReference type="GO" id="GO:0005737">
    <property type="term" value="C:cytoplasm"/>
    <property type="evidence" value="ECO:0007669"/>
    <property type="project" value="UniProtKB-SubCell"/>
</dbReference>
<dbReference type="GO" id="GO:0043919">
    <property type="term" value="F:agmatine aminopropyltransferase activity"/>
    <property type="evidence" value="ECO:0000314"/>
    <property type="project" value="UniProtKB"/>
</dbReference>
<dbReference type="GO" id="GO:0043918">
    <property type="term" value="F:cadaverine aminopropyltransferase activity"/>
    <property type="evidence" value="ECO:0000314"/>
    <property type="project" value="UniProtKB"/>
</dbReference>
<dbReference type="GO" id="GO:0004766">
    <property type="term" value="F:spermidine synthase activity"/>
    <property type="evidence" value="ECO:0007669"/>
    <property type="project" value="UniProtKB-UniRule"/>
</dbReference>
<dbReference type="GO" id="GO:0006596">
    <property type="term" value="P:polyamine biosynthetic process"/>
    <property type="evidence" value="ECO:0000314"/>
    <property type="project" value="UniProtKB"/>
</dbReference>
<dbReference type="GO" id="GO:0008295">
    <property type="term" value="P:spermidine biosynthetic process"/>
    <property type="evidence" value="ECO:0000314"/>
    <property type="project" value="UniProtKB"/>
</dbReference>
<dbReference type="CDD" id="cd02440">
    <property type="entry name" value="AdoMet_MTases"/>
    <property type="match status" value="1"/>
</dbReference>
<dbReference type="FunFam" id="2.30.140.10:FF:000009">
    <property type="entry name" value="Polyamine aminopropyltransferase"/>
    <property type="match status" value="1"/>
</dbReference>
<dbReference type="Gene3D" id="2.30.140.10">
    <property type="entry name" value="Spermidine synthase, tetramerisation domain"/>
    <property type="match status" value="1"/>
</dbReference>
<dbReference type="Gene3D" id="3.40.50.150">
    <property type="entry name" value="Vaccinia Virus protein VP39"/>
    <property type="match status" value="1"/>
</dbReference>
<dbReference type="HAMAP" id="MF_00198">
    <property type="entry name" value="Spermidine_synth"/>
    <property type="match status" value="1"/>
</dbReference>
<dbReference type="InterPro" id="IPR030374">
    <property type="entry name" value="PABS"/>
</dbReference>
<dbReference type="InterPro" id="IPR030373">
    <property type="entry name" value="PABS_CS"/>
</dbReference>
<dbReference type="InterPro" id="IPR029063">
    <property type="entry name" value="SAM-dependent_MTases_sf"/>
</dbReference>
<dbReference type="InterPro" id="IPR001045">
    <property type="entry name" value="Spermi_synthase"/>
</dbReference>
<dbReference type="InterPro" id="IPR035246">
    <property type="entry name" value="Spermidine_synt_N"/>
</dbReference>
<dbReference type="InterPro" id="IPR037163">
    <property type="entry name" value="Spermidine_synt_N_sf"/>
</dbReference>
<dbReference type="NCBIfam" id="NF002010">
    <property type="entry name" value="PRK00811.1"/>
    <property type="match status" value="1"/>
</dbReference>
<dbReference type="NCBIfam" id="TIGR00417">
    <property type="entry name" value="speE"/>
    <property type="match status" value="1"/>
</dbReference>
<dbReference type="PANTHER" id="PTHR11558:SF11">
    <property type="entry name" value="SPERMIDINE SYNTHASE"/>
    <property type="match status" value="1"/>
</dbReference>
<dbReference type="PANTHER" id="PTHR11558">
    <property type="entry name" value="SPERMIDINE/SPERMINE SYNTHASE"/>
    <property type="match status" value="1"/>
</dbReference>
<dbReference type="Pfam" id="PF17284">
    <property type="entry name" value="Spermine_synt_N"/>
    <property type="match status" value="1"/>
</dbReference>
<dbReference type="Pfam" id="PF01564">
    <property type="entry name" value="Spermine_synth"/>
    <property type="match status" value="1"/>
</dbReference>
<dbReference type="SUPFAM" id="SSF53335">
    <property type="entry name" value="S-adenosyl-L-methionine-dependent methyltransferases"/>
    <property type="match status" value="1"/>
</dbReference>
<dbReference type="PROSITE" id="PS01330">
    <property type="entry name" value="PABS_1"/>
    <property type="match status" value="1"/>
</dbReference>
<dbReference type="PROSITE" id="PS51006">
    <property type="entry name" value="PABS_2"/>
    <property type="match status" value="1"/>
</dbReference>
<protein>
    <recommendedName>
        <fullName evidence="1 3">Polyamine aminopropyltransferase</fullName>
    </recommendedName>
    <alternativeName>
        <fullName evidence="4">Agmatine aminopropyltransferase</fullName>
        <ecNumber evidence="2">2.5.1.104</ecNumber>
    </alternativeName>
    <alternativeName>
        <fullName evidence="4">Cadaverine aminopropyltransferase</fullName>
        <ecNumber evidence="2">2.5.1.-</ecNumber>
    </alternativeName>
    <alternativeName>
        <fullName evidence="4">N1-aminopropylagmatine synthase</fullName>
    </alternativeName>
    <alternativeName>
        <fullName evidence="1">Putrescine aminopropyltransferase</fullName>
        <shortName evidence="1">PAPT</shortName>
    </alternativeName>
    <alternativeName>
        <fullName evidence="1 3">Spermidine synthase</fullName>
        <shortName evidence="1 3">SPDS</shortName>
        <shortName evidence="1 3">SPDSY</shortName>
        <ecNumber evidence="1 2">2.5.1.16</ecNumber>
    </alternativeName>
</protein>
<proteinExistence type="evidence at protein level"/>
<comment type="function">
    <text evidence="2">Involved in the biosynthesis of polyamines which are thought to support the growth of thermophilic microorganisms under high-temperature conditions. It seems that long-chain and branched-chain of polyamines effectively stabilize DNA and RNA, respectively. Catalyzes the irreversible transfer of a propylamine group from the amino donor S-adenosylmethioninamine (decarboxy-AdoMet) to agmatine to yield N1-aminopropylagmatine. It can also use cadaverine (1,5-diaminopentane) and putrescine (1,4-diaminobutane) as substrate with a lower activity than that of agmatine. The reaction involves a nucleophilic attack on the C-3 methylene of the propylamine moiety adjacent to the positively charged sulfur of decarboxy-AdoMet.</text>
</comment>
<comment type="catalytic activity">
    <reaction evidence="2">
        <text>S-adenosyl 3-(methylsulfanyl)propylamine + agmatine = N(1)-(3-aminopropyl)agmatine + S-methyl-5'-thioadenosine + H(+)</text>
        <dbReference type="Rhea" id="RHEA:36487"/>
        <dbReference type="ChEBI" id="CHEBI:15378"/>
        <dbReference type="ChEBI" id="CHEBI:17509"/>
        <dbReference type="ChEBI" id="CHEBI:57443"/>
        <dbReference type="ChEBI" id="CHEBI:58145"/>
        <dbReference type="ChEBI" id="CHEBI:64335"/>
        <dbReference type="EC" id="2.5.1.104"/>
    </reaction>
</comment>
<comment type="catalytic activity">
    <reaction evidence="1 2">
        <text>S-adenosyl 3-(methylsulfanyl)propylamine + putrescine = S-methyl-5'-thioadenosine + spermidine + H(+)</text>
        <dbReference type="Rhea" id="RHEA:12721"/>
        <dbReference type="ChEBI" id="CHEBI:15378"/>
        <dbReference type="ChEBI" id="CHEBI:17509"/>
        <dbReference type="ChEBI" id="CHEBI:57443"/>
        <dbReference type="ChEBI" id="CHEBI:57834"/>
        <dbReference type="ChEBI" id="CHEBI:326268"/>
        <dbReference type="EC" id="2.5.1.16"/>
    </reaction>
</comment>
<comment type="catalytic activity">
    <reaction evidence="2">
        <text>cadaverine + S-adenosyl 3-(methylsulfanyl)propylamine = aminopropylcadaverine + S-methyl-5'-thioadenosine + H(+)</text>
        <dbReference type="Rhea" id="RHEA:33387"/>
        <dbReference type="ChEBI" id="CHEBI:15378"/>
        <dbReference type="ChEBI" id="CHEBI:17509"/>
        <dbReference type="ChEBI" id="CHEBI:57443"/>
        <dbReference type="ChEBI" id="CHEBI:58384"/>
        <dbReference type="ChEBI" id="CHEBI:64858"/>
    </reaction>
</comment>
<comment type="biophysicochemical properties">
    <kinetics>
        <KM evidence="2">12.2 uM for agmatine (at pH 9 and 70 degrees Celsius)</KM>
        <KM evidence="2">80.7 uM for cadaverine (at pH 9 and 70 degrees Celsius)</KM>
        <KM evidence="2">1053 uM for putrescine (at pH 9 and 70 degrees Celsius)</KM>
        <text evidence="2">kcat is 0.3 sec(-1) for aminopropyl transferase activity with putrescine as substrate (at pH 9 and 70 degrees Celsius). kcat is 0.28 sec(-1) for aminopropyl transferase activity with agmatine as substrate (at pH 9 and 70 degrees Celsius). kcat is 0.02 sec(-1) for aminopropyl transferase activity with cadaverine as substrate (at pH 9 and 70 degrees Celsius).</text>
    </kinetics>
</comment>
<comment type="pathway">
    <text evidence="1">Amine and polyamine biosynthesis; spermidine biosynthesis; spermidine from putrescine: step 1/1.</text>
</comment>
<comment type="subunit">
    <text evidence="1">Homodimer or homotetramer.</text>
</comment>
<comment type="subcellular location">
    <subcellularLocation>
        <location evidence="1 2">Cytoplasm</location>
    </subcellularLocation>
</comment>
<comment type="disruption phenotype">
    <text evidence="2">Cells lacking this gene show decreased growth at 85 and 93 degrees Celsius. The growth rate is slightly restored at 85 degrees Celsius by the addition of spermidine, however growth at 93 degrees Celsius is not restored even when spermidine is added. This mutant accumulates agmatine at 85 degrees Celsius.</text>
</comment>
<comment type="miscellaneous">
    <text evidence="4">In T.kodakarensis, two kinds of synthetic pathways from agmatine to spermidine are predicted. One is the pathway via putrescine (pathway I), and the other is that via N1-aminopropylagmatine (pathway II).</text>
</comment>
<comment type="similarity">
    <text evidence="1">Belongs to the spermidine/spermine synthase family.</text>
</comment>
<name>SPEE_THEKO</name>
<evidence type="ECO:0000255" key="1">
    <source>
        <dbReference type="HAMAP-Rule" id="MF_00198"/>
    </source>
</evidence>
<evidence type="ECO:0000269" key="2">
    <source>
    </source>
</evidence>
<evidence type="ECO:0000303" key="3">
    <source>
    </source>
</evidence>
<evidence type="ECO:0000305" key="4">
    <source>
    </source>
</evidence>